<feature type="chain" id="PRO_0000184758" description="Pyrrolidone-carboxylate peptidase 1">
    <location>
        <begin position="1"/>
        <end position="211"/>
    </location>
</feature>
<feature type="active site" evidence="1">
    <location>
        <position position="79"/>
    </location>
</feature>
<feature type="active site" evidence="1">
    <location>
        <position position="142"/>
    </location>
</feature>
<feature type="active site" evidence="1">
    <location>
        <position position="164"/>
    </location>
</feature>
<comment type="function">
    <text evidence="1">Removes 5-oxoproline from various penultimate amino acid residues except L-proline.</text>
</comment>
<comment type="catalytic activity">
    <reaction>
        <text>Release of an N-terminal pyroglutamyl group from a polypeptide, the second amino acid generally not being Pro.</text>
        <dbReference type="EC" id="3.4.19.3"/>
    </reaction>
</comment>
<comment type="subunit">
    <text evidence="1">Homotetramer.</text>
</comment>
<comment type="subcellular location">
    <subcellularLocation>
        <location evidence="1">Cytoplasm</location>
    </subcellularLocation>
</comment>
<comment type="similarity">
    <text evidence="2">Belongs to the peptidase C15 family.</text>
</comment>
<accession>P58201</accession>
<sequence length="211" mass="23681">MTVLLFGFEPFLEYKENPSQLIVEALNRSTILKEEVKGVILPVEYKKIEDVIVTKIRETKPILTLGIGLAPGRAKITPEKIAINYRYSREGDNAGKKYRGEKIDPLGQDGIFTNIPVEDLVDLLNENGIPAELSLSAGSYLCNNAMYIIIREARKYNSLGGFIHVPLHESYAARIQRSIPSMSLDTMIRGIKLSIEFILTNKNKKENLTLS</sequence>
<reference key="1">
    <citation type="journal article" date="2001" name="Proc. Natl. Acad. Sci. U.S.A.">
        <title>The complete genome of the crenarchaeon Sulfolobus solfataricus P2.</title>
        <authorList>
            <person name="She Q."/>
            <person name="Singh R.K."/>
            <person name="Confalonieri F."/>
            <person name="Zivanovic Y."/>
            <person name="Allard G."/>
            <person name="Awayez M.J."/>
            <person name="Chan-Weiher C.C.-Y."/>
            <person name="Clausen I.G."/>
            <person name="Curtis B.A."/>
            <person name="De Moors A."/>
            <person name="Erauso G."/>
            <person name="Fletcher C."/>
            <person name="Gordon P.M.K."/>
            <person name="Heikamp-de Jong I."/>
            <person name="Jeffries A.C."/>
            <person name="Kozera C.J."/>
            <person name="Medina N."/>
            <person name="Peng X."/>
            <person name="Thi-Ngoc H.P."/>
            <person name="Redder P."/>
            <person name="Schenk M.E."/>
            <person name="Theriault C."/>
            <person name="Tolstrup N."/>
            <person name="Charlebois R.L."/>
            <person name="Doolittle W.F."/>
            <person name="Duguet M."/>
            <person name="Gaasterland T."/>
            <person name="Garrett R.A."/>
            <person name="Ragan M.A."/>
            <person name="Sensen C.W."/>
            <person name="Van der Oost J."/>
        </authorList>
    </citation>
    <scope>NUCLEOTIDE SEQUENCE [LARGE SCALE GENOMIC DNA]</scope>
    <source>
        <strain>ATCC 35092 / DSM 1617 / JCM 11322 / P2</strain>
    </source>
</reference>
<proteinExistence type="inferred from homology"/>
<keyword id="KW-0963">Cytoplasm</keyword>
<keyword id="KW-0378">Hydrolase</keyword>
<keyword id="KW-0645">Protease</keyword>
<keyword id="KW-1185">Reference proteome</keyword>
<keyword id="KW-0788">Thiol protease</keyword>
<dbReference type="EC" id="3.4.19.3"/>
<dbReference type="EMBL" id="AE006641">
    <property type="protein sequence ID" value="AAK41693.1"/>
    <property type="molecule type" value="Genomic_DNA"/>
</dbReference>
<dbReference type="PIR" id="F90304">
    <property type="entry name" value="F90304"/>
</dbReference>
<dbReference type="RefSeq" id="WP_009989153.1">
    <property type="nucleotide sequence ID" value="NC_002754.1"/>
</dbReference>
<dbReference type="SMR" id="P58201"/>
<dbReference type="FunCoup" id="P58201">
    <property type="interactions" value="49"/>
</dbReference>
<dbReference type="STRING" id="273057.SSO1465"/>
<dbReference type="MEROPS" id="C15.001"/>
<dbReference type="PaxDb" id="273057-SSO1465"/>
<dbReference type="EnsemblBacteria" id="AAK41693">
    <property type="protein sequence ID" value="AAK41693"/>
    <property type="gene ID" value="SSO1465"/>
</dbReference>
<dbReference type="KEGG" id="sso:SSO1465"/>
<dbReference type="PATRIC" id="fig|273057.12.peg.1497"/>
<dbReference type="eggNOG" id="arCOG05850">
    <property type="taxonomic scope" value="Archaea"/>
</dbReference>
<dbReference type="HOGENOM" id="CLU_043960_4_3_2"/>
<dbReference type="InParanoid" id="P58201"/>
<dbReference type="PhylomeDB" id="P58201"/>
<dbReference type="Proteomes" id="UP000001974">
    <property type="component" value="Chromosome"/>
</dbReference>
<dbReference type="GO" id="GO:0005829">
    <property type="term" value="C:cytosol"/>
    <property type="evidence" value="ECO:0007669"/>
    <property type="project" value="InterPro"/>
</dbReference>
<dbReference type="GO" id="GO:0016920">
    <property type="term" value="F:pyroglutamyl-peptidase activity"/>
    <property type="evidence" value="ECO:0007669"/>
    <property type="project" value="UniProtKB-UniRule"/>
</dbReference>
<dbReference type="GO" id="GO:0006508">
    <property type="term" value="P:proteolysis"/>
    <property type="evidence" value="ECO:0007669"/>
    <property type="project" value="UniProtKB-KW"/>
</dbReference>
<dbReference type="CDD" id="cd00501">
    <property type="entry name" value="Peptidase_C15"/>
    <property type="match status" value="1"/>
</dbReference>
<dbReference type="Gene3D" id="3.40.630.20">
    <property type="entry name" value="Peptidase C15, pyroglutamyl peptidase I-like"/>
    <property type="match status" value="1"/>
</dbReference>
<dbReference type="HAMAP" id="MF_00417">
    <property type="entry name" value="Pyrrolid_peptidase"/>
    <property type="match status" value="1"/>
</dbReference>
<dbReference type="InterPro" id="IPR000816">
    <property type="entry name" value="Peptidase_C15"/>
</dbReference>
<dbReference type="InterPro" id="IPR016125">
    <property type="entry name" value="Peptidase_C15-like"/>
</dbReference>
<dbReference type="InterPro" id="IPR036440">
    <property type="entry name" value="Peptidase_C15-like_sf"/>
</dbReference>
<dbReference type="InterPro" id="IPR029762">
    <property type="entry name" value="PGP-I_bact-type"/>
</dbReference>
<dbReference type="InterPro" id="IPR033694">
    <property type="entry name" value="PGPEP1_Cys_AS"/>
</dbReference>
<dbReference type="InterPro" id="IPR033693">
    <property type="entry name" value="PGPEP1_Glu_AS"/>
</dbReference>
<dbReference type="NCBIfam" id="NF009672">
    <property type="entry name" value="PRK13193.1"/>
    <property type="match status" value="1"/>
</dbReference>
<dbReference type="PANTHER" id="PTHR23402">
    <property type="entry name" value="PROTEASE FAMILY C15 PYROGLUTAMYL-PEPTIDASE I-RELATED"/>
    <property type="match status" value="1"/>
</dbReference>
<dbReference type="PANTHER" id="PTHR23402:SF1">
    <property type="entry name" value="PYROGLUTAMYL-PEPTIDASE I"/>
    <property type="match status" value="1"/>
</dbReference>
<dbReference type="Pfam" id="PF01470">
    <property type="entry name" value="Peptidase_C15"/>
    <property type="match status" value="1"/>
</dbReference>
<dbReference type="PIRSF" id="PIRSF015592">
    <property type="entry name" value="Prld-crbxl_pptds"/>
    <property type="match status" value="1"/>
</dbReference>
<dbReference type="PRINTS" id="PR00706">
    <property type="entry name" value="PYROGLUPTASE"/>
</dbReference>
<dbReference type="SUPFAM" id="SSF53182">
    <property type="entry name" value="Pyrrolidone carboxyl peptidase (pyroglutamate aminopeptidase)"/>
    <property type="match status" value="1"/>
</dbReference>
<dbReference type="PROSITE" id="PS01334">
    <property type="entry name" value="PYRASE_CYS"/>
    <property type="match status" value="1"/>
</dbReference>
<dbReference type="PROSITE" id="PS01333">
    <property type="entry name" value="PYRASE_GLU"/>
    <property type="match status" value="1"/>
</dbReference>
<protein>
    <recommendedName>
        <fullName>Pyrrolidone-carboxylate peptidase 1</fullName>
        <ecNumber>3.4.19.3</ecNumber>
    </recommendedName>
    <alternativeName>
        <fullName>5-oxoprolyl-peptidase 1</fullName>
    </alternativeName>
    <alternativeName>
        <fullName>Pyroglutamyl-peptidase I 1</fullName>
        <shortName>PGP-I 1</shortName>
        <shortName>Pyrase 1</shortName>
    </alternativeName>
</protein>
<name>PCP1_SACS2</name>
<evidence type="ECO:0000250" key="1"/>
<evidence type="ECO:0000305" key="2"/>
<gene>
    <name type="primary">pcp1</name>
    <name type="ordered locus">SSO1465</name>
</gene>
<organism>
    <name type="scientific">Saccharolobus solfataricus (strain ATCC 35092 / DSM 1617 / JCM 11322 / P2)</name>
    <name type="common">Sulfolobus solfataricus</name>
    <dbReference type="NCBI Taxonomy" id="273057"/>
    <lineage>
        <taxon>Archaea</taxon>
        <taxon>Thermoproteota</taxon>
        <taxon>Thermoprotei</taxon>
        <taxon>Sulfolobales</taxon>
        <taxon>Sulfolobaceae</taxon>
        <taxon>Saccharolobus</taxon>
    </lineage>
</organism>